<organism>
    <name type="scientific">Solanum tuberosum</name>
    <name type="common">Potato</name>
    <dbReference type="NCBI Taxonomy" id="4113"/>
    <lineage>
        <taxon>Eukaryota</taxon>
        <taxon>Viridiplantae</taxon>
        <taxon>Streptophyta</taxon>
        <taxon>Embryophyta</taxon>
        <taxon>Tracheophyta</taxon>
        <taxon>Spermatophyta</taxon>
        <taxon>Magnoliopsida</taxon>
        <taxon>eudicotyledons</taxon>
        <taxon>Gunneridae</taxon>
        <taxon>Pentapetalae</taxon>
        <taxon>asterids</taxon>
        <taxon>lamiids</taxon>
        <taxon>Solanales</taxon>
        <taxon>Solanaceae</taxon>
        <taxon>Solanoideae</taxon>
        <taxon>Solaneae</taxon>
        <taxon>Solanum</taxon>
    </lineage>
</organism>
<feature type="chain" id="PRO_0000275964" description="Photosystem I P700 chlorophyll a apoprotein A1">
    <location>
        <begin position="1"/>
        <end position="750"/>
    </location>
</feature>
<feature type="transmembrane region" description="Helical; Name=I" evidence="1">
    <location>
        <begin position="70"/>
        <end position="93"/>
    </location>
</feature>
<feature type="transmembrane region" description="Helical; Name=II" evidence="1">
    <location>
        <begin position="156"/>
        <end position="179"/>
    </location>
</feature>
<feature type="transmembrane region" description="Helical; Name=III" evidence="1">
    <location>
        <begin position="195"/>
        <end position="219"/>
    </location>
</feature>
<feature type="transmembrane region" description="Helical; Name=IV" evidence="1">
    <location>
        <begin position="291"/>
        <end position="309"/>
    </location>
</feature>
<feature type="transmembrane region" description="Helical; Name=V" evidence="1">
    <location>
        <begin position="346"/>
        <end position="369"/>
    </location>
</feature>
<feature type="transmembrane region" description="Helical; Name=VI" evidence="1">
    <location>
        <begin position="385"/>
        <end position="411"/>
    </location>
</feature>
<feature type="transmembrane region" description="Helical; Name=VII" evidence="1">
    <location>
        <begin position="433"/>
        <end position="455"/>
    </location>
</feature>
<feature type="transmembrane region" description="Helical; Name=VIII" evidence="1">
    <location>
        <begin position="531"/>
        <end position="549"/>
    </location>
</feature>
<feature type="transmembrane region" description="Helical; Name=IX" evidence="1">
    <location>
        <begin position="589"/>
        <end position="610"/>
    </location>
</feature>
<feature type="transmembrane region" description="Helical; Name=X" evidence="1">
    <location>
        <begin position="664"/>
        <end position="686"/>
    </location>
</feature>
<feature type="transmembrane region" description="Helical; Name=XI" evidence="1">
    <location>
        <begin position="724"/>
        <end position="744"/>
    </location>
</feature>
<feature type="binding site" evidence="1">
    <location>
        <position position="573"/>
    </location>
    <ligand>
        <name>[4Fe-4S] cluster</name>
        <dbReference type="ChEBI" id="CHEBI:49883"/>
        <note>ligand shared between dimeric partners</note>
    </ligand>
</feature>
<feature type="binding site" evidence="1">
    <location>
        <position position="582"/>
    </location>
    <ligand>
        <name>[4Fe-4S] cluster</name>
        <dbReference type="ChEBI" id="CHEBI:49883"/>
        <note>ligand shared between dimeric partners</note>
    </ligand>
</feature>
<feature type="binding site" description="axial binding residue" evidence="1">
    <location>
        <position position="675"/>
    </location>
    <ligand>
        <name>chlorophyll a'</name>
        <dbReference type="ChEBI" id="CHEBI:189419"/>
        <label>A1</label>
    </ligand>
    <ligandPart>
        <name>Mg</name>
        <dbReference type="ChEBI" id="CHEBI:25107"/>
    </ligandPart>
</feature>
<feature type="binding site" description="axial binding residue" evidence="1">
    <location>
        <position position="683"/>
    </location>
    <ligand>
        <name>chlorophyll a</name>
        <dbReference type="ChEBI" id="CHEBI:58416"/>
        <label>A3</label>
    </ligand>
    <ligandPart>
        <name>Mg</name>
        <dbReference type="ChEBI" id="CHEBI:25107"/>
    </ligandPart>
</feature>
<feature type="binding site" evidence="1">
    <location>
        <position position="691"/>
    </location>
    <ligand>
        <name>chlorophyll a</name>
        <dbReference type="ChEBI" id="CHEBI:58416"/>
        <label>A3</label>
    </ligand>
</feature>
<feature type="binding site" evidence="1">
    <location>
        <position position="692"/>
    </location>
    <ligand>
        <name>phylloquinone</name>
        <dbReference type="ChEBI" id="CHEBI:18067"/>
        <label>A</label>
    </ligand>
</feature>
<feature type="sequence conflict" description="In Ref. 1; ABB90041." evidence="2" ref="1">
    <original>E</original>
    <variation>G</variation>
    <location>
        <position position="25"/>
    </location>
</feature>
<feature type="sequence conflict" description="In Ref. 1; ABB90041." evidence="2" ref="1">
    <original>Y</original>
    <variation>F</variation>
    <location>
        <position position="374"/>
    </location>
</feature>
<feature type="sequence conflict" description="In Ref. 1; ABB90041." evidence="2" ref="1">
    <original>AT</original>
    <variation>PS</variation>
    <location>
        <begin position="378"/>
        <end position="379"/>
    </location>
</feature>
<feature type="sequence conflict" description="In Ref. 1; ABB90041." evidence="2" ref="1">
    <original>G</original>
    <variation>C</variation>
    <location>
        <position position="382"/>
    </location>
</feature>
<feature type="sequence conflict" description="In Ref. 1; ABB90041." evidence="2" ref="1">
    <original>P</original>
    <variation>H</variation>
    <location>
        <position position="523"/>
    </location>
</feature>
<feature type="sequence conflict" description="In Ref. 1; ABB90041." evidence="2" ref="1">
    <original>A</original>
    <variation>D</variation>
    <location>
        <position position="529"/>
    </location>
</feature>
<feature type="sequence conflict" description="In Ref. 1; ABB90041." evidence="2" ref="1">
    <original>F</original>
    <variation>S</variation>
    <location>
        <position position="539"/>
    </location>
</feature>
<proteinExistence type="inferred from homology"/>
<keyword id="KW-0004">4Fe-4S</keyword>
<keyword id="KW-0148">Chlorophyll</keyword>
<keyword id="KW-0150">Chloroplast</keyword>
<keyword id="KW-0157">Chromophore</keyword>
<keyword id="KW-0249">Electron transport</keyword>
<keyword id="KW-0408">Iron</keyword>
<keyword id="KW-0411">Iron-sulfur</keyword>
<keyword id="KW-0460">Magnesium</keyword>
<keyword id="KW-0472">Membrane</keyword>
<keyword id="KW-0479">Metal-binding</keyword>
<keyword id="KW-0560">Oxidoreductase</keyword>
<keyword id="KW-0602">Photosynthesis</keyword>
<keyword id="KW-0603">Photosystem I</keyword>
<keyword id="KW-0934">Plastid</keyword>
<keyword id="KW-1185">Reference proteome</keyword>
<keyword id="KW-0793">Thylakoid</keyword>
<keyword id="KW-0812">Transmembrane</keyword>
<keyword id="KW-1133">Transmembrane helix</keyword>
<keyword id="KW-0813">Transport</keyword>
<gene>
    <name evidence="1" type="primary">psaA</name>
</gene>
<accession>Q27S50</accession>
<accession>Q2VEH7</accession>
<dbReference type="EC" id="1.97.1.12" evidence="1"/>
<dbReference type="EMBL" id="DQ231562">
    <property type="protein sequence ID" value="ABB90041.1"/>
    <property type="molecule type" value="Genomic_DNA"/>
</dbReference>
<dbReference type="EMBL" id="DQ386163">
    <property type="protein sequence ID" value="ABD47057.1"/>
    <property type="molecule type" value="Genomic_DNA"/>
</dbReference>
<dbReference type="RefSeq" id="YP_635639.1">
    <property type="nucleotide sequence ID" value="NC_008096.2"/>
</dbReference>
<dbReference type="SMR" id="Q27S50"/>
<dbReference type="FunCoup" id="Q27S50">
    <property type="interactions" value="293"/>
</dbReference>
<dbReference type="STRING" id="4113.Q27S50"/>
<dbReference type="PaxDb" id="4113-PGSC0003DMT400013730"/>
<dbReference type="GeneID" id="4099969"/>
<dbReference type="KEGG" id="sot:4099969"/>
<dbReference type="eggNOG" id="ENOG502QRYE">
    <property type="taxonomic scope" value="Eukaryota"/>
</dbReference>
<dbReference type="InParanoid" id="Q27S50"/>
<dbReference type="OrthoDB" id="1252832at2759"/>
<dbReference type="Proteomes" id="UP000011115">
    <property type="component" value="Unassembled WGS sequence"/>
</dbReference>
<dbReference type="ExpressionAtlas" id="Q27S50">
    <property type="expression patterns" value="baseline and differential"/>
</dbReference>
<dbReference type="GO" id="GO:0009535">
    <property type="term" value="C:chloroplast thylakoid membrane"/>
    <property type="evidence" value="ECO:0007669"/>
    <property type="project" value="UniProtKB-SubCell"/>
</dbReference>
<dbReference type="GO" id="GO:0009522">
    <property type="term" value="C:photosystem I"/>
    <property type="evidence" value="ECO:0007669"/>
    <property type="project" value="UniProtKB-KW"/>
</dbReference>
<dbReference type="GO" id="GO:0051539">
    <property type="term" value="F:4 iron, 4 sulfur cluster binding"/>
    <property type="evidence" value="ECO:0007669"/>
    <property type="project" value="UniProtKB-KW"/>
</dbReference>
<dbReference type="GO" id="GO:0016168">
    <property type="term" value="F:chlorophyll binding"/>
    <property type="evidence" value="ECO:0007669"/>
    <property type="project" value="UniProtKB-KW"/>
</dbReference>
<dbReference type="GO" id="GO:0009055">
    <property type="term" value="F:electron transfer activity"/>
    <property type="evidence" value="ECO:0007669"/>
    <property type="project" value="UniProtKB-UniRule"/>
</dbReference>
<dbReference type="GO" id="GO:0000287">
    <property type="term" value="F:magnesium ion binding"/>
    <property type="evidence" value="ECO:0007669"/>
    <property type="project" value="UniProtKB-UniRule"/>
</dbReference>
<dbReference type="GO" id="GO:0016491">
    <property type="term" value="F:oxidoreductase activity"/>
    <property type="evidence" value="ECO:0007669"/>
    <property type="project" value="UniProtKB-KW"/>
</dbReference>
<dbReference type="GO" id="GO:0015979">
    <property type="term" value="P:photosynthesis"/>
    <property type="evidence" value="ECO:0007669"/>
    <property type="project" value="UniProtKB-UniRule"/>
</dbReference>
<dbReference type="FunFam" id="1.20.1130.10:FF:000001">
    <property type="entry name" value="Photosystem I P700 chlorophyll a apoprotein A2"/>
    <property type="match status" value="1"/>
</dbReference>
<dbReference type="Gene3D" id="1.20.1130.10">
    <property type="entry name" value="Photosystem I PsaA/PsaB"/>
    <property type="match status" value="1"/>
</dbReference>
<dbReference type="HAMAP" id="MF_00458">
    <property type="entry name" value="PSI_PsaA"/>
    <property type="match status" value="1"/>
</dbReference>
<dbReference type="InterPro" id="IPR006243">
    <property type="entry name" value="PSI_PsaA"/>
</dbReference>
<dbReference type="InterPro" id="IPR001280">
    <property type="entry name" value="PSI_PsaA/B"/>
</dbReference>
<dbReference type="InterPro" id="IPR020586">
    <property type="entry name" value="PSI_PsaA/B_CS"/>
</dbReference>
<dbReference type="InterPro" id="IPR036408">
    <property type="entry name" value="PSI_PsaA/B_sf"/>
</dbReference>
<dbReference type="NCBIfam" id="TIGR01335">
    <property type="entry name" value="psaA"/>
    <property type="match status" value="1"/>
</dbReference>
<dbReference type="PANTHER" id="PTHR30128">
    <property type="entry name" value="OUTER MEMBRANE PROTEIN, OMPA-RELATED"/>
    <property type="match status" value="1"/>
</dbReference>
<dbReference type="PANTHER" id="PTHR30128:SF19">
    <property type="entry name" value="PHOTOSYSTEM I P700 CHLOROPHYLL A APOPROTEIN A1-RELATED"/>
    <property type="match status" value="1"/>
</dbReference>
<dbReference type="Pfam" id="PF00223">
    <property type="entry name" value="PsaA_PsaB"/>
    <property type="match status" value="1"/>
</dbReference>
<dbReference type="PIRSF" id="PIRSF002905">
    <property type="entry name" value="PSI_A"/>
    <property type="match status" value="1"/>
</dbReference>
<dbReference type="PRINTS" id="PR00257">
    <property type="entry name" value="PHOTSYSPSAAB"/>
</dbReference>
<dbReference type="SUPFAM" id="SSF81558">
    <property type="entry name" value="Photosystem I subunits PsaA/PsaB"/>
    <property type="match status" value="1"/>
</dbReference>
<dbReference type="PROSITE" id="PS00419">
    <property type="entry name" value="PHOTOSYSTEM_I_PSAAB"/>
    <property type="match status" value="1"/>
</dbReference>
<geneLocation type="chloroplast"/>
<reference key="1">
    <citation type="journal article" date="2006" name="Plant Cell Rep.">
        <title>The complete chloroplast genome sequences of Solanum tuberosum and comparative analysis with Solanaceae species identified the presence of a 241-bp deletion in cultivated potato chloroplast DNA sequence.</title>
        <authorList>
            <person name="Chung H.-J."/>
            <person name="Jung J.D."/>
            <person name="Park H.-W."/>
            <person name="Kim J.-H."/>
            <person name="Cha H.W."/>
            <person name="Min S.R."/>
            <person name="Jeong W.-J."/>
            <person name="Liu J.R."/>
        </authorList>
    </citation>
    <scope>NUCLEOTIDE SEQUENCE [LARGE SCALE GENOMIC DNA]</scope>
    <source>
        <strain>cv. Desiree</strain>
    </source>
</reference>
<reference key="2">
    <citation type="submission" date="2006-02" db="EMBL/GenBank/DDBJ databases">
        <title>Complete chloroplast genome sequences of Solanum tuberosum cultivar Desiree and comparative analyses with other Solanaceae genomes.</title>
        <authorList>
            <person name="Gargano D."/>
            <person name="Scotti N."/>
            <person name="Vezzi A."/>
            <person name="Bilardi A."/>
            <person name="Valle G."/>
            <person name="Grillo S."/>
            <person name="Cardi T."/>
        </authorList>
    </citation>
    <scope>NUCLEOTIDE SEQUENCE [LARGE SCALE GENOMIC DNA]</scope>
    <source>
        <strain>cv. Desiree</strain>
    </source>
</reference>
<sequence>MIIRSPEPEVKILVDRDPVKTSFEEWARPGHFSRTIAKGPDTTTWIWNLHADAHDFDSHTSDLEEISRKVFSAHFGQLSIIFLWLSGMYFHGARFSNYEAWLSDPTHIGPSAQVVWPIVGQEILNGDVGGGFRGIQITSGFFQLWRASGITSELQLYCTAIGALVFAALMLFAGWFHYHKAAPKLAWFQDVESMLNHHLAGLLGLGSLSWAGHQVHVSLPINQFLNAGVDPKEIPLPHEFILNRDLLAQLYPSFAEGATPFFTLNWSKYADFLTFRGGLDPVTGGLWLTDIAHHHLAIAILFLIAGHMYRTNWGIGHGLKDILEAHKGPFTGQGHKGLYEILTTSWHAQLSLNLAMLGSLTIVVAHHMYSMPPYPYLATDYGTQLSLFTHHMWIGGFLIVGAAAHAAIFMVRDYDPTTRYNDLLDRVLRHRDAIISHLNWACIFLGFHSFGLYIHNDTMSALGRPQDMFSDTAIQLQPVFAQWIQNTHALAPGATAPGATASTSLTWGGGDLVAVGGKVALLPIPLGTADFLVHHIHAFTIHVTVLILLKGVLFARSSRLIPDKANLGFRFPCDGPGRGGTCQVSAWDHVFLGLFWMYNSISVVIFHFSWKMQSDVWGSVSDQGVVTHITGGNFAQSSITINGWLRDFLWAQASQVIQSYGSSLSAYGLFFLGAHFVWAFSLMFLFSGRGYWQELIESIVWAHNKLKVAPATQPRALSIIQGRAVGVTHYLLGGIATTWAFFLARIIAVG</sequence>
<protein>
    <recommendedName>
        <fullName evidence="1">Photosystem I P700 chlorophyll a apoprotein A1</fullName>
        <ecNumber evidence="1">1.97.1.12</ecNumber>
    </recommendedName>
    <alternativeName>
        <fullName evidence="1">PSI-A</fullName>
    </alternativeName>
    <alternativeName>
        <fullName evidence="1">PsaA</fullName>
    </alternativeName>
</protein>
<name>PSAA_SOLTU</name>
<evidence type="ECO:0000255" key="1">
    <source>
        <dbReference type="HAMAP-Rule" id="MF_00458"/>
    </source>
</evidence>
<evidence type="ECO:0000305" key="2"/>
<comment type="function">
    <text>PsaA and PsaB bind P700, the primary electron donor of photosystem I (PSI), as well as the electron acceptors A0, A1 and FX. PSI is a plastocyanin-ferredoxin oxidoreductase, converting photonic excitation into a charge separation, which transfers an electron from the donor P700 chlorophyll pair to the spectroscopically characterized acceptors A0, A1, FX, FA and FB in turn. Oxidized P700 is reduced on the lumenal side of the thylakoid membrane by plastocyanin.</text>
</comment>
<comment type="catalytic activity">
    <reaction evidence="1">
        <text>reduced [plastocyanin] + hnu + oxidized [2Fe-2S]-[ferredoxin] = oxidized [plastocyanin] + reduced [2Fe-2S]-[ferredoxin]</text>
        <dbReference type="Rhea" id="RHEA:30407"/>
        <dbReference type="Rhea" id="RHEA-COMP:10000"/>
        <dbReference type="Rhea" id="RHEA-COMP:10001"/>
        <dbReference type="Rhea" id="RHEA-COMP:10039"/>
        <dbReference type="Rhea" id="RHEA-COMP:10040"/>
        <dbReference type="ChEBI" id="CHEBI:29036"/>
        <dbReference type="ChEBI" id="CHEBI:30212"/>
        <dbReference type="ChEBI" id="CHEBI:33737"/>
        <dbReference type="ChEBI" id="CHEBI:33738"/>
        <dbReference type="ChEBI" id="CHEBI:49552"/>
        <dbReference type="EC" id="1.97.1.12"/>
    </reaction>
</comment>
<comment type="cofactor">
    <text evidence="1">P700 is a chlorophyll a/chlorophyll a' dimer, A0 is one or more chlorophyll a, A1 is one or both phylloquinones and FX is a shared 4Fe-4S iron-sulfur center.</text>
</comment>
<comment type="subunit">
    <text evidence="1">The PsaA/B heterodimer binds the P700 chlorophyll special pair and subsequent electron acceptors. PSI consists of a core antenna complex that captures photons, and an electron transfer chain that converts photonic excitation into a charge separation. The eukaryotic PSI reaction center is composed of at least 11 subunits.</text>
</comment>
<comment type="subcellular location">
    <subcellularLocation>
        <location evidence="1">Plastid</location>
        <location evidence="1">Chloroplast thylakoid membrane</location>
        <topology evidence="1">Multi-pass membrane protein</topology>
    </subcellularLocation>
</comment>
<comment type="similarity">
    <text evidence="1">Belongs to the PsaA/PsaB family.</text>
</comment>